<organism>
    <name type="scientific">Caenorhabditis elegans</name>
    <dbReference type="NCBI Taxonomy" id="6239"/>
    <lineage>
        <taxon>Eukaryota</taxon>
        <taxon>Metazoa</taxon>
        <taxon>Ecdysozoa</taxon>
        <taxon>Nematoda</taxon>
        <taxon>Chromadorea</taxon>
        <taxon>Rhabditida</taxon>
        <taxon>Rhabditina</taxon>
        <taxon>Rhabditomorpha</taxon>
        <taxon>Rhabditoidea</taxon>
        <taxon>Rhabditidae</taxon>
        <taxon>Peloderinae</taxon>
        <taxon>Caenorhabditis</taxon>
    </lineage>
</organism>
<evidence type="ECO:0000250" key="1"/>
<evidence type="ECO:0000250" key="2">
    <source>
        <dbReference type="UniProtKB" id="Q9NP72"/>
    </source>
</evidence>
<evidence type="ECO:0000269" key="3">
    <source>
    </source>
</evidence>
<evidence type="ECO:0000305" key="4"/>
<gene>
    <name type="primary">rab-18</name>
    <name type="ORF">Y92C3B.3</name>
</gene>
<feature type="chain" id="PRO_0000121200" description="Ras-related protein Rab-18">
    <location>
        <begin position="1"/>
        <end position="203"/>
    </location>
</feature>
<feature type="short sequence motif" description="Effector region" evidence="1">
    <location>
        <begin position="40"/>
        <end position="48"/>
    </location>
</feature>
<feature type="binding site" evidence="2">
    <location>
        <position position="20"/>
    </location>
    <ligand>
        <name>GTP</name>
        <dbReference type="ChEBI" id="CHEBI:37565"/>
    </ligand>
</feature>
<feature type="binding site" evidence="2">
    <location>
        <position position="23"/>
    </location>
    <ligand>
        <name>GTP</name>
        <dbReference type="ChEBI" id="CHEBI:37565"/>
    </ligand>
</feature>
<feature type="binding site" evidence="2">
    <location>
        <position position="24"/>
    </location>
    <ligand>
        <name>GTP</name>
        <dbReference type="ChEBI" id="CHEBI:37565"/>
    </ligand>
</feature>
<feature type="binding site" evidence="2">
    <location>
        <position position="25"/>
    </location>
    <ligand>
        <name>GTP</name>
        <dbReference type="ChEBI" id="CHEBI:37565"/>
    </ligand>
</feature>
<feature type="binding site" evidence="2">
    <location>
        <position position="26"/>
    </location>
    <ligand>
        <name>GTP</name>
        <dbReference type="ChEBI" id="CHEBI:37565"/>
    </ligand>
</feature>
<feature type="binding site" evidence="2">
    <location>
        <position position="37"/>
    </location>
    <ligand>
        <name>GTP</name>
        <dbReference type="ChEBI" id="CHEBI:37565"/>
    </ligand>
</feature>
<feature type="binding site" evidence="2">
    <location>
        <position position="38"/>
    </location>
    <ligand>
        <name>GTP</name>
        <dbReference type="ChEBI" id="CHEBI:37565"/>
    </ligand>
</feature>
<feature type="binding site" evidence="2">
    <location>
        <position position="43"/>
    </location>
    <ligand>
        <name>GTP</name>
        <dbReference type="ChEBI" id="CHEBI:37565"/>
    </ligand>
</feature>
<feature type="binding site" evidence="2">
    <location>
        <position position="69"/>
    </location>
    <ligand>
        <name>GTP</name>
        <dbReference type="ChEBI" id="CHEBI:37565"/>
    </ligand>
</feature>
<feature type="binding site" evidence="2">
    <location>
        <position position="126"/>
    </location>
    <ligand>
        <name>GTP</name>
        <dbReference type="ChEBI" id="CHEBI:37565"/>
    </ligand>
</feature>
<feature type="binding site" evidence="2">
    <location>
        <position position="128"/>
    </location>
    <ligand>
        <name>GTP</name>
        <dbReference type="ChEBI" id="CHEBI:37565"/>
    </ligand>
</feature>
<feature type="binding site" evidence="2">
    <location>
        <position position="155"/>
    </location>
    <ligand>
        <name>GTP</name>
        <dbReference type="ChEBI" id="CHEBI:37565"/>
    </ligand>
</feature>
<feature type="modified residue" description="Cysteine methyl ester" evidence="1">
    <location>
        <position position="203"/>
    </location>
</feature>
<feature type="lipid moiety-binding region" description="S-geranylgeranyl cysteine" evidence="1">
    <location>
        <position position="201"/>
    </location>
</feature>
<feature type="lipid moiety-binding region" description="S-geranylgeranyl cysteine" evidence="1">
    <location>
        <position position="203"/>
    </location>
</feature>
<feature type="splice variant" id="VSP_020784" description="In isoform a." evidence="4">
    <location>
        <begin position="1"/>
        <end position="27"/>
    </location>
</feature>
<feature type="splice variant" id="VSP_020785" description="In isoform a." evidence="4">
    <original>M</original>
    <variation>MVRKSRFCSIFGLKNNFQ</variation>
    <location>
        <position position="129"/>
    </location>
</feature>
<proteinExistence type="inferred from homology"/>
<accession>Q8MXS1</accession>
<accession>Q9BL22</accession>
<sequence>MSDDSSSPLTTLKILIIGESGVGKSSLMLRFVDDVFDPEQAATIGVDFRVTSMAIDGNRVKLAIWDTAGQERFRTLTPSYYRGAQGVICVYDVTSRSSFEKLNHWMQEVDTYCTNDNIIKMMVANKIDMPNRVVTREEGLKFAKRHRTLFIEASAKTKEGVQCTFEELIEKIIQTPDLWDNDRPSFRLGQPTGSSGGGGMCGC</sequence>
<comment type="function">
    <text evidence="2 3">The small GTPases Rab are key regulators of intracellular membrane trafficking, from the formation of transport vesicles to their fusion with membranes. Rabs cycle between an inactive GDP-bound form and an active GTP-bound form that is able to recruit to membranes different sets of downstream effectors directly responsible for vesicle formation, movement, tethering and fusion (By similarity). Plays a role in apical endocytosis/recycling (PubMed:24843160). May be implicated in transport between the plasma membrane and early endosomes (By similarity). Plays a role in the shedding of pathogen spores from intestinal cells (PubMed:24843160).</text>
</comment>
<comment type="catalytic activity">
    <reaction evidence="2">
        <text>GTP + H2O = GDP + phosphate + H(+)</text>
        <dbReference type="Rhea" id="RHEA:19669"/>
        <dbReference type="ChEBI" id="CHEBI:15377"/>
        <dbReference type="ChEBI" id="CHEBI:15378"/>
        <dbReference type="ChEBI" id="CHEBI:37565"/>
        <dbReference type="ChEBI" id="CHEBI:43474"/>
        <dbReference type="ChEBI" id="CHEBI:58189"/>
        <dbReference type="EC" id="3.6.5.2"/>
    </reaction>
    <physiologicalReaction direction="left-to-right" evidence="2">
        <dbReference type="Rhea" id="RHEA:19670"/>
    </physiologicalReaction>
</comment>
<comment type="alternative products">
    <event type="alternative splicing"/>
    <isoform>
        <id>Q8MXS1-1</id>
        <name>b</name>
        <sequence type="displayed"/>
    </isoform>
    <isoform>
        <id>Q8MXS1-2</id>
        <name>a</name>
        <sequence type="described" ref="VSP_020784 VSP_020785"/>
    </isoform>
</comment>
<comment type="disruption phenotype">
    <text evidence="3">RNAi-mediated knockdown results in disrupted clearance of intracellular pathogen N.parisii from intestinal cells.</text>
</comment>
<comment type="similarity">
    <text evidence="4">Belongs to the small GTPase superfamily. Rab family.</text>
</comment>
<name>RAB18_CAEEL</name>
<protein>
    <recommendedName>
        <fullName>Ras-related protein Rab-18</fullName>
        <ecNumber evidence="2">3.6.5.2</ecNumber>
    </recommendedName>
</protein>
<dbReference type="EC" id="3.6.5.2" evidence="2"/>
<dbReference type="EMBL" id="FO080242">
    <property type="protein sequence ID" value="CCD62282.1"/>
    <property type="molecule type" value="Genomic_DNA"/>
</dbReference>
<dbReference type="EMBL" id="FO080242">
    <property type="protein sequence ID" value="CCD62283.1"/>
    <property type="molecule type" value="Genomic_DNA"/>
</dbReference>
<dbReference type="RefSeq" id="NP_741092.1">
    <molecule id="Q8MXS1-1"/>
    <property type="nucleotide sequence ID" value="NM_171081.7"/>
</dbReference>
<dbReference type="RefSeq" id="NP_741093.2">
    <molecule id="Q8MXS1-2"/>
    <property type="nucleotide sequence ID" value="NM_171861.6"/>
</dbReference>
<dbReference type="SMR" id="Q8MXS1"/>
<dbReference type="BioGRID" id="40535">
    <property type="interactions" value="4"/>
</dbReference>
<dbReference type="FunCoup" id="Q8MXS1">
    <property type="interactions" value="3036"/>
</dbReference>
<dbReference type="STRING" id="6239.Y92C3B.3b.2"/>
<dbReference type="PaxDb" id="6239-Y92C3B.3b"/>
<dbReference type="PeptideAtlas" id="Q8MXS1"/>
<dbReference type="EnsemblMetazoa" id="Y92C3B.3a.1">
    <molecule id="Q8MXS1-2"/>
    <property type="protein sequence ID" value="Y92C3B.3a.1"/>
    <property type="gene ID" value="WBGene00004277"/>
</dbReference>
<dbReference type="EnsemblMetazoa" id="Y92C3B.3a.2">
    <molecule id="Q8MXS1-2"/>
    <property type="protein sequence ID" value="Y92C3B.3a.2"/>
    <property type="gene ID" value="WBGene00004277"/>
</dbReference>
<dbReference type="EnsemblMetazoa" id="Y92C3B.3b.1">
    <molecule id="Q8MXS1-1"/>
    <property type="protein sequence ID" value="Y92C3B.3b.1"/>
    <property type="gene ID" value="WBGene00004277"/>
</dbReference>
<dbReference type="EnsemblMetazoa" id="Y92C3B.3b.2">
    <molecule id="Q8MXS1-1"/>
    <property type="protein sequence ID" value="Y92C3B.3b.2"/>
    <property type="gene ID" value="WBGene00004277"/>
</dbReference>
<dbReference type="GeneID" id="175272"/>
<dbReference type="KEGG" id="cel:CELE_Y92C3B.3"/>
<dbReference type="UCSC" id="Y92C3B.3b">
    <molecule id="Q8MXS1-1"/>
    <property type="organism name" value="c. elegans"/>
</dbReference>
<dbReference type="AGR" id="WB:WBGene00004277"/>
<dbReference type="CTD" id="175272"/>
<dbReference type="WormBase" id="Y92C3B.3a">
    <molecule id="Q8MXS1-2"/>
    <property type="protein sequence ID" value="CE34438"/>
    <property type="gene ID" value="WBGene00004277"/>
    <property type="gene designation" value="rab-18"/>
</dbReference>
<dbReference type="WormBase" id="Y92C3B.3b">
    <molecule id="Q8MXS1-1"/>
    <property type="protein sequence ID" value="CE27340"/>
    <property type="gene ID" value="WBGene00004277"/>
    <property type="gene designation" value="rab-18"/>
</dbReference>
<dbReference type="eggNOG" id="KOG0080">
    <property type="taxonomic scope" value="Eukaryota"/>
</dbReference>
<dbReference type="GeneTree" id="ENSGT00940000169006"/>
<dbReference type="HOGENOM" id="CLU_041217_10_7_1"/>
<dbReference type="InParanoid" id="Q8MXS1"/>
<dbReference type="OMA" id="RVHKMDV"/>
<dbReference type="OrthoDB" id="9989112at2759"/>
<dbReference type="PhylomeDB" id="Q8MXS1"/>
<dbReference type="Reactome" id="R-CEL-6798695">
    <property type="pathway name" value="Neutrophil degranulation"/>
</dbReference>
<dbReference type="Reactome" id="R-CEL-6811436">
    <property type="pathway name" value="COPI-independent Golgi-to-ER retrograde traffic"/>
</dbReference>
<dbReference type="Reactome" id="R-CEL-8873719">
    <property type="pathway name" value="RAB geranylgeranylation"/>
</dbReference>
<dbReference type="Reactome" id="R-CEL-8876198">
    <property type="pathway name" value="RAB GEFs exchange GTP for GDP on RABs"/>
</dbReference>
<dbReference type="PRO" id="PR:Q8MXS1"/>
<dbReference type="Proteomes" id="UP000001940">
    <property type="component" value="Chromosome III"/>
</dbReference>
<dbReference type="Bgee" id="WBGene00004277">
    <property type="expression patterns" value="Expressed in embryo and 3 other cell types or tissues"/>
</dbReference>
<dbReference type="GO" id="GO:0012505">
    <property type="term" value="C:endomembrane system"/>
    <property type="evidence" value="ECO:0000318"/>
    <property type="project" value="GO_Central"/>
</dbReference>
<dbReference type="GO" id="GO:0005794">
    <property type="term" value="C:Golgi apparatus"/>
    <property type="evidence" value="ECO:0000318"/>
    <property type="project" value="GO_Central"/>
</dbReference>
<dbReference type="GO" id="GO:0005525">
    <property type="term" value="F:GTP binding"/>
    <property type="evidence" value="ECO:0007669"/>
    <property type="project" value="UniProtKB-KW"/>
</dbReference>
<dbReference type="GO" id="GO:0003924">
    <property type="term" value="F:GTPase activity"/>
    <property type="evidence" value="ECO:0000250"/>
    <property type="project" value="UniProtKB"/>
</dbReference>
<dbReference type="GO" id="GO:0006886">
    <property type="term" value="P:intracellular protein transport"/>
    <property type="evidence" value="ECO:0000318"/>
    <property type="project" value="GO_Central"/>
</dbReference>
<dbReference type="GO" id="GO:0034389">
    <property type="term" value="P:lipid droplet organization"/>
    <property type="evidence" value="ECO:0000318"/>
    <property type="project" value="GO_Central"/>
</dbReference>
<dbReference type="CDD" id="cd01863">
    <property type="entry name" value="Rab18"/>
    <property type="match status" value="1"/>
</dbReference>
<dbReference type="FunFam" id="3.40.50.300:FF:000430">
    <property type="entry name" value="Probable Ras-related protein Rab-18"/>
    <property type="match status" value="1"/>
</dbReference>
<dbReference type="Gene3D" id="3.40.50.300">
    <property type="entry name" value="P-loop containing nucleotide triphosphate hydrolases"/>
    <property type="match status" value="1"/>
</dbReference>
<dbReference type="InterPro" id="IPR027417">
    <property type="entry name" value="P-loop_NTPase"/>
</dbReference>
<dbReference type="InterPro" id="IPR050227">
    <property type="entry name" value="Rab"/>
</dbReference>
<dbReference type="InterPro" id="IPR025662">
    <property type="entry name" value="Sigma_54_int_dom_ATP-bd_1"/>
</dbReference>
<dbReference type="InterPro" id="IPR005225">
    <property type="entry name" value="Small_GTP-bd"/>
</dbReference>
<dbReference type="InterPro" id="IPR001806">
    <property type="entry name" value="Small_GTPase"/>
</dbReference>
<dbReference type="NCBIfam" id="TIGR00231">
    <property type="entry name" value="small_GTP"/>
    <property type="match status" value="1"/>
</dbReference>
<dbReference type="PANTHER" id="PTHR47977">
    <property type="entry name" value="RAS-RELATED PROTEIN RAB"/>
    <property type="match status" value="1"/>
</dbReference>
<dbReference type="Pfam" id="PF00071">
    <property type="entry name" value="Ras"/>
    <property type="match status" value="1"/>
</dbReference>
<dbReference type="PRINTS" id="PR00449">
    <property type="entry name" value="RASTRNSFRMNG"/>
</dbReference>
<dbReference type="SMART" id="SM00177">
    <property type="entry name" value="ARF"/>
    <property type="match status" value="1"/>
</dbReference>
<dbReference type="SMART" id="SM00175">
    <property type="entry name" value="RAB"/>
    <property type="match status" value="1"/>
</dbReference>
<dbReference type="SMART" id="SM00176">
    <property type="entry name" value="RAN"/>
    <property type="match status" value="1"/>
</dbReference>
<dbReference type="SMART" id="SM00173">
    <property type="entry name" value="RAS"/>
    <property type="match status" value="1"/>
</dbReference>
<dbReference type="SMART" id="SM00174">
    <property type="entry name" value="RHO"/>
    <property type="match status" value="1"/>
</dbReference>
<dbReference type="SUPFAM" id="SSF52540">
    <property type="entry name" value="P-loop containing nucleoside triphosphate hydrolases"/>
    <property type="match status" value="1"/>
</dbReference>
<dbReference type="PROSITE" id="PS51419">
    <property type="entry name" value="RAB"/>
    <property type="match status" value="1"/>
</dbReference>
<keyword id="KW-0025">Alternative splicing</keyword>
<keyword id="KW-0342">GTP-binding</keyword>
<keyword id="KW-0378">Hydrolase</keyword>
<keyword id="KW-0449">Lipoprotein</keyword>
<keyword id="KW-0488">Methylation</keyword>
<keyword id="KW-0547">Nucleotide-binding</keyword>
<keyword id="KW-0636">Prenylation</keyword>
<keyword id="KW-0653">Protein transport</keyword>
<keyword id="KW-1185">Reference proteome</keyword>
<keyword id="KW-0813">Transport</keyword>
<reference key="1">
    <citation type="journal article" date="1998" name="Science">
        <title>Genome sequence of the nematode C. elegans: a platform for investigating biology.</title>
        <authorList>
            <consortium name="The C. elegans sequencing consortium"/>
        </authorList>
    </citation>
    <scope>NUCLEOTIDE SEQUENCE [LARGE SCALE GENOMIC DNA]</scope>
    <scope>ALTERNATIVE SPLICING</scope>
    <source>
        <strain>Bristol N2</strain>
    </source>
</reference>
<reference key="2">
    <citation type="journal article" date="2014" name="Proc. Natl. Acad. Sci. U.S.A.">
        <title>The small GTPase RAB-11 directs polarized exocytosis of the intracellular pathogen N. parisii for fecal-oral transmission from C. elegans.</title>
        <authorList>
            <person name="Szumowski S.C."/>
            <person name="Botts M.R."/>
            <person name="Popovich J.J."/>
            <person name="Smelkinson M.G."/>
            <person name="Troemel E.R."/>
        </authorList>
    </citation>
    <scope>FUNCTION</scope>
    <scope>DISRUPTION PHENOTYPE</scope>
</reference>